<feature type="chain" id="PRO_1000076215" description="Arginine--tRNA ligase">
    <location>
        <begin position="1"/>
        <end position="592"/>
    </location>
</feature>
<feature type="short sequence motif" description="'HIGH' region">
    <location>
        <begin position="123"/>
        <end position="133"/>
    </location>
</feature>
<organism>
    <name type="scientific">Flavobacterium johnsoniae (strain ATCC 17061 / DSM 2064 / JCM 8514 / BCRC 14874 / CCUG 350202 / NBRC 14942 / NCIMB 11054 / UW101)</name>
    <name type="common">Cytophaga johnsonae</name>
    <dbReference type="NCBI Taxonomy" id="376686"/>
    <lineage>
        <taxon>Bacteria</taxon>
        <taxon>Pseudomonadati</taxon>
        <taxon>Bacteroidota</taxon>
        <taxon>Flavobacteriia</taxon>
        <taxon>Flavobacteriales</taxon>
        <taxon>Flavobacteriaceae</taxon>
        <taxon>Flavobacterium</taxon>
    </lineage>
</organism>
<name>SYR_FLAJ1</name>
<dbReference type="EC" id="6.1.1.19" evidence="1"/>
<dbReference type="EMBL" id="CP000685">
    <property type="protein sequence ID" value="ABQ03287.1"/>
    <property type="molecule type" value="Genomic_DNA"/>
</dbReference>
<dbReference type="RefSeq" id="WP_012022357.1">
    <property type="nucleotide sequence ID" value="NC_009441.1"/>
</dbReference>
<dbReference type="SMR" id="A5FND6"/>
<dbReference type="STRING" id="376686.Fjoh_0251"/>
<dbReference type="KEGG" id="fjo:Fjoh_0251"/>
<dbReference type="eggNOG" id="COG0018">
    <property type="taxonomic scope" value="Bacteria"/>
</dbReference>
<dbReference type="HOGENOM" id="CLU_006406_6_1_10"/>
<dbReference type="OrthoDB" id="9805987at2"/>
<dbReference type="Proteomes" id="UP000006694">
    <property type="component" value="Chromosome"/>
</dbReference>
<dbReference type="GO" id="GO:0005737">
    <property type="term" value="C:cytoplasm"/>
    <property type="evidence" value="ECO:0007669"/>
    <property type="project" value="UniProtKB-SubCell"/>
</dbReference>
<dbReference type="GO" id="GO:0004814">
    <property type="term" value="F:arginine-tRNA ligase activity"/>
    <property type="evidence" value="ECO:0007669"/>
    <property type="project" value="UniProtKB-UniRule"/>
</dbReference>
<dbReference type="GO" id="GO:0005524">
    <property type="term" value="F:ATP binding"/>
    <property type="evidence" value="ECO:0007669"/>
    <property type="project" value="UniProtKB-UniRule"/>
</dbReference>
<dbReference type="GO" id="GO:0006420">
    <property type="term" value="P:arginyl-tRNA aminoacylation"/>
    <property type="evidence" value="ECO:0007669"/>
    <property type="project" value="UniProtKB-UniRule"/>
</dbReference>
<dbReference type="FunFam" id="1.10.730.10:FF:000006">
    <property type="entry name" value="Arginyl-tRNA synthetase 2, mitochondrial"/>
    <property type="match status" value="1"/>
</dbReference>
<dbReference type="Gene3D" id="3.30.1360.70">
    <property type="entry name" value="Arginyl tRNA synthetase N-terminal domain"/>
    <property type="match status" value="1"/>
</dbReference>
<dbReference type="Gene3D" id="3.40.50.620">
    <property type="entry name" value="HUPs"/>
    <property type="match status" value="1"/>
</dbReference>
<dbReference type="Gene3D" id="1.10.730.10">
    <property type="entry name" value="Isoleucyl-tRNA Synthetase, Domain 1"/>
    <property type="match status" value="1"/>
</dbReference>
<dbReference type="HAMAP" id="MF_00123">
    <property type="entry name" value="Arg_tRNA_synth"/>
    <property type="match status" value="1"/>
</dbReference>
<dbReference type="InterPro" id="IPR001412">
    <property type="entry name" value="aa-tRNA-synth_I_CS"/>
</dbReference>
<dbReference type="InterPro" id="IPR001278">
    <property type="entry name" value="Arg-tRNA-ligase"/>
</dbReference>
<dbReference type="InterPro" id="IPR005148">
    <property type="entry name" value="Arg-tRNA-synth_N"/>
</dbReference>
<dbReference type="InterPro" id="IPR036695">
    <property type="entry name" value="Arg-tRNA-synth_N_sf"/>
</dbReference>
<dbReference type="InterPro" id="IPR035684">
    <property type="entry name" value="ArgRS_core"/>
</dbReference>
<dbReference type="InterPro" id="IPR008909">
    <property type="entry name" value="DALR_anticod-bd"/>
</dbReference>
<dbReference type="InterPro" id="IPR014729">
    <property type="entry name" value="Rossmann-like_a/b/a_fold"/>
</dbReference>
<dbReference type="InterPro" id="IPR009080">
    <property type="entry name" value="tRNAsynth_Ia_anticodon-bd"/>
</dbReference>
<dbReference type="NCBIfam" id="TIGR00456">
    <property type="entry name" value="argS"/>
    <property type="match status" value="1"/>
</dbReference>
<dbReference type="PANTHER" id="PTHR11956:SF5">
    <property type="entry name" value="ARGININE--TRNA LIGASE, CYTOPLASMIC"/>
    <property type="match status" value="1"/>
</dbReference>
<dbReference type="PANTHER" id="PTHR11956">
    <property type="entry name" value="ARGINYL-TRNA SYNTHETASE"/>
    <property type="match status" value="1"/>
</dbReference>
<dbReference type="Pfam" id="PF03485">
    <property type="entry name" value="Arg_tRNA_synt_N"/>
    <property type="match status" value="1"/>
</dbReference>
<dbReference type="Pfam" id="PF05746">
    <property type="entry name" value="DALR_1"/>
    <property type="match status" value="1"/>
</dbReference>
<dbReference type="Pfam" id="PF00750">
    <property type="entry name" value="tRNA-synt_1d"/>
    <property type="match status" value="1"/>
</dbReference>
<dbReference type="PRINTS" id="PR01038">
    <property type="entry name" value="TRNASYNTHARG"/>
</dbReference>
<dbReference type="SMART" id="SM01016">
    <property type="entry name" value="Arg_tRNA_synt_N"/>
    <property type="match status" value="1"/>
</dbReference>
<dbReference type="SMART" id="SM00836">
    <property type="entry name" value="DALR_1"/>
    <property type="match status" value="1"/>
</dbReference>
<dbReference type="SUPFAM" id="SSF47323">
    <property type="entry name" value="Anticodon-binding domain of a subclass of class I aminoacyl-tRNA synthetases"/>
    <property type="match status" value="1"/>
</dbReference>
<dbReference type="SUPFAM" id="SSF55190">
    <property type="entry name" value="Arginyl-tRNA synthetase (ArgRS), N-terminal 'additional' domain"/>
    <property type="match status" value="1"/>
</dbReference>
<dbReference type="SUPFAM" id="SSF52374">
    <property type="entry name" value="Nucleotidylyl transferase"/>
    <property type="match status" value="1"/>
</dbReference>
<dbReference type="PROSITE" id="PS00178">
    <property type="entry name" value="AA_TRNA_LIGASE_I"/>
    <property type="match status" value="1"/>
</dbReference>
<accession>A5FND6</accession>
<proteinExistence type="inferred from homology"/>
<gene>
    <name evidence="1" type="primary">argS</name>
    <name type="ordered locus">Fjoh_0251</name>
</gene>
<sequence length="592" mass="67140">MSLSQILTPSIQKAIQVLFDVSVDKIEFQTTRKEFEGDITMVIFPLLKVIKSNPAELGNKIGTYLVENVSEVARFNVVSGFLNIVISDSYYVDFFNGIKDQKQFGFLSPNPEEKAVMVEYSSPNTNKPLHLGHVRNNLLGYSVAEILKASGKKVYKTQIINDRGIHICKSMLAWEKFGNGETPESSDLKGDKLVGKYYVEFDKAYKTEINQLIETGKTEEEAKKQAPIIIEAQEMLKKWEAGDEQVIALWKKMNQWVYDGFATTYTNLGVNFDKYYYESNTYLLGKDVVQVGLDKGVFEKDPDGSVWIDLTDEGLDRKIVLRSDGTAVYMTQDIGTAIQRVKDMPDVGGMVYTVGNEQDYHFKVLFLILKKLGFDWASSLYHLSYGMVDLPSGKMKSREGTVVDADDLMQDMTDTAKQIAEDLGKLDSYSADEKAKLYKTIGLGALKYYILKVDPKKRILFNPEESVDFAGNTGPFIQYTYARIQSIIRKADFDFSNKIEIEELHEKEKELVKQIELFPEVIQNAAQNHSPALIANYTYDLVKEYNSFYQSVHILGEADLTKKIFRVQLSQKVAEVIKSAFSLLGIEVPERM</sequence>
<keyword id="KW-0030">Aminoacyl-tRNA synthetase</keyword>
<keyword id="KW-0067">ATP-binding</keyword>
<keyword id="KW-0963">Cytoplasm</keyword>
<keyword id="KW-0436">Ligase</keyword>
<keyword id="KW-0547">Nucleotide-binding</keyword>
<keyword id="KW-0648">Protein biosynthesis</keyword>
<reference key="1">
    <citation type="journal article" date="2009" name="Appl. Environ. Microbiol.">
        <title>Novel features of the polysaccharide-digesting gliding bacterium Flavobacterium johnsoniae as revealed by genome sequence analysis.</title>
        <authorList>
            <person name="McBride M.J."/>
            <person name="Xie G."/>
            <person name="Martens E.C."/>
            <person name="Lapidus A."/>
            <person name="Henrissat B."/>
            <person name="Rhodes R.G."/>
            <person name="Goltsman E."/>
            <person name="Wang W."/>
            <person name="Xu J."/>
            <person name="Hunnicutt D.W."/>
            <person name="Staroscik A.M."/>
            <person name="Hoover T.R."/>
            <person name="Cheng Y.Q."/>
            <person name="Stein J.L."/>
        </authorList>
    </citation>
    <scope>NUCLEOTIDE SEQUENCE [LARGE SCALE GENOMIC DNA]</scope>
    <source>
        <strain>ATCC 17061 / DSM 2064 / JCM 8514 / BCRC 14874 / CCUG 350202 / NBRC 14942 / NCIMB 11054 / UW101</strain>
    </source>
</reference>
<evidence type="ECO:0000255" key="1">
    <source>
        <dbReference type="HAMAP-Rule" id="MF_00123"/>
    </source>
</evidence>
<protein>
    <recommendedName>
        <fullName evidence="1">Arginine--tRNA ligase</fullName>
        <ecNumber evidence="1">6.1.1.19</ecNumber>
    </recommendedName>
    <alternativeName>
        <fullName evidence="1">Arginyl-tRNA synthetase</fullName>
        <shortName evidence="1">ArgRS</shortName>
    </alternativeName>
</protein>
<comment type="catalytic activity">
    <reaction evidence="1">
        <text>tRNA(Arg) + L-arginine + ATP = L-arginyl-tRNA(Arg) + AMP + diphosphate</text>
        <dbReference type="Rhea" id="RHEA:20301"/>
        <dbReference type="Rhea" id="RHEA-COMP:9658"/>
        <dbReference type="Rhea" id="RHEA-COMP:9673"/>
        <dbReference type="ChEBI" id="CHEBI:30616"/>
        <dbReference type="ChEBI" id="CHEBI:32682"/>
        <dbReference type="ChEBI" id="CHEBI:33019"/>
        <dbReference type="ChEBI" id="CHEBI:78442"/>
        <dbReference type="ChEBI" id="CHEBI:78513"/>
        <dbReference type="ChEBI" id="CHEBI:456215"/>
        <dbReference type="EC" id="6.1.1.19"/>
    </reaction>
</comment>
<comment type="subunit">
    <text evidence="1">Monomer.</text>
</comment>
<comment type="subcellular location">
    <subcellularLocation>
        <location evidence="1">Cytoplasm</location>
    </subcellularLocation>
</comment>
<comment type="similarity">
    <text evidence="1">Belongs to the class-I aminoacyl-tRNA synthetase family.</text>
</comment>